<feature type="chain" id="PRO_0000164283" description="UPF0346 protein SA1254">
    <location>
        <begin position="1"/>
        <end position="73"/>
    </location>
</feature>
<comment type="similarity">
    <text evidence="1">Belongs to the UPF0346 family.</text>
</comment>
<proteinExistence type="inferred from homology"/>
<accession>Q7A5M8</accession>
<gene>
    <name type="ordered locus">SA1254</name>
</gene>
<name>Y1254_STAAN</name>
<evidence type="ECO:0000255" key="1">
    <source>
        <dbReference type="HAMAP-Rule" id="MF_01538"/>
    </source>
</evidence>
<dbReference type="EMBL" id="BA000018">
    <property type="protein sequence ID" value="BAB42514.1"/>
    <property type="molecule type" value="Genomic_DNA"/>
</dbReference>
<dbReference type="PIR" id="E89919">
    <property type="entry name" value="E89919"/>
</dbReference>
<dbReference type="RefSeq" id="WP_000801007.1">
    <property type="nucleotide sequence ID" value="NC_002745.2"/>
</dbReference>
<dbReference type="SMR" id="Q7A5M8"/>
<dbReference type="EnsemblBacteria" id="BAB42514">
    <property type="protein sequence ID" value="BAB42514"/>
    <property type="gene ID" value="BAB42514"/>
</dbReference>
<dbReference type="KEGG" id="sau:SA1254"/>
<dbReference type="HOGENOM" id="CLU_177534_1_0_9"/>
<dbReference type="Gene3D" id="1.10.150.260">
    <property type="entry name" value="YozE SAM-like"/>
    <property type="match status" value="1"/>
</dbReference>
<dbReference type="HAMAP" id="MF_01538">
    <property type="entry name" value="UPF0346"/>
    <property type="match status" value="1"/>
</dbReference>
<dbReference type="InterPro" id="IPR010673">
    <property type="entry name" value="UPF0346"/>
</dbReference>
<dbReference type="InterPro" id="IPR023089">
    <property type="entry name" value="YozE_SAM-like"/>
</dbReference>
<dbReference type="InterPro" id="IPR036806">
    <property type="entry name" value="YozE_SAM-like_sf"/>
</dbReference>
<dbReference type="NCBIfam" id="NF010193">
    <property type="entry name" value="PRK13672.1"/>
    <property type="match status" value="1"/>
</dbReference>
<dbReference type="Pfam" id="PF06855">
    <property type="entry name" value="YozE_SAM_like"/>
    <property type="match status" value="1"/>
</dbReference>
<dbReference type="PIRSF" id="PIRSF037262">
    <property type="entry name" value="UCP037262"/>
    <property type="match status" value="1"/>
</dbReference>
<dbReference type="SUPFAM" id="SSF140652">
    <property type="entry name" value="YozE-like"/>
    <property type="match status" value="1"/>
</dbReference>
<reference key="1">
    <citation type="journal article" date="2001" name="Lancet">
        <title>Whole genome sequencing of meticillin-resistant Staphylococcus aureus.</title>
        <authorList>
            <person name="Kuroda M."/>
            <person name="Ohta T."/>
            <person name="Uchiyama I."/>
            <person name="Baba T."/>
            <person name="Yuzawa H."/>
            <person name="Kobayashi I."/>
            <person name="Cui L."/>
            <person name="Oguchi A."/>
            <person name="Aoki K."/>
            <person name="Nagai Y."/>
            <person name="Lian J.-Q."/>
            <person name="Ito T."/>
            <person name="Kanamori M."/>
            <person name="Matsumaru H."/>
            <person name="Maruyama A."/>
            <person name="Murakami H."/>
            <person name="Hosoyama A."/>
            <person name="Mizutani-Ui Y."/>
            <person name="Takahashi N.K."/>
            <person name="Sawano T."/>
            <person name="Inoue R."/>
            <person name="Kaito C."/>
            <person name="Sekimizu K."/>
            <person name="Hirakawa H."/>
            <person name="Kuhara S."/>
            <person name="Goto S."/>
            <person name="Yabuzaki J."/>
            <person name="Kanehisa M."/>
            <person name="Yamashita A."/>
            <person name="Oshima K."/>
            <person name="Furuya K."/>
            <person name="Yoshino C."/>
            <person name="Shiba T."/>
            <person name="Hattori M."/>
            <person name="Ogasawara N."/>
            <person name="Hayashi H."/>
            <person name="Hiramatsu K."/>
        </authorList>
    </citation>
    <scope>NUCLEOTIDE SEQUENCE [LARGE SCALE GENOMIC DNA]</scope>
    <source>
        <strain>N315</strain>
    </source>
</reference>
<protein>
    <recommendedName>
        <fullName evidence="1">UPF0346 protein SA1254</fullName>
    </recommendedName>
</protein>
<sequence>MKNYSFYQFVMTVRGRHDDKGRLAEEIFDDLAFPKHDDDFNILSDYIETHGDFTLPMSVFDDLYEEYTEWLKF</sequence>
<organism>
    <name type="scientific">Staphylococcus aureus (strain N315)</name>
    <dbReference type="NCBI Taxonomy" id="158879"/>
    <lineage>
        <taxon>Bacteria</taxon>
        <taxon>Bacillati</taxon>
        <taxon>Bacillota</taxon>
        <taxon>Bacilli</taxon>
        <taxon>Bacillales</taxon>
        <taxon>Staphylococcaceae</taxon>
        <taxon>Staphylococcus</taxon>
    </lineage>
</organism>